<reference key="1">
    <citation type="journal article" date="2007" name="PLoS Genet.">
        <title>A tale of two oxidation states: bacterial colonization of arsenic-rich environments.</title>
        <authorList>
            <person name="Muller D."/>
            <person name="Medigue C."/>
            <person name="Koechler S."/>
            <person name="Barbe V."/>
            <person name="Barakat M."/>
            <person name="Talla E."/>
            <person name="Bonnefoy V."/>
            <person name="Krin E."/>
            <person name="Arsene-Ploetze F."/>
            <person name="Carapito C."/>
            <person name="Chandler M."/>
            <person name="Cournoyer B."/>
            <person name="Cruveiller S."/>
            <person name="Dossat C."/>
            <person name="Duval S."/>
            <person name="Heymann M."/>
            <person name="Leize E."/>
            <person name="Lieutaud A."/>
            <person name="Lievremont D."/>
            <person name="Makita Y."/>
            <person name="Mangenot S."/>
            <person name="Nitschke W."/>
            <person name="Ortet P."/>
            <person name="Perdrial N."/>
            <person name="Schoepp B."/>
            <person name="Siguier P."/>
            <person name="Simeonova D.D."/>
            <person name="Rouy Z."/>
            <person name="Segurens B."/>
            <person name="Turlin E."/>
            <person name="Vallenet D."/>
            <person name="van Dorsselaer A."/>
            <person name="Weiss S."/>
            <person name="Weissenbach J."/>
            <person name="Lett M.-C."/>
            <person name="Danchin A."/>
            <person name="Bertin P.N."/>
        </authorList>
    </citation>
    <scope>NUCLEOTIDE SEQUENCE [LARGE SCALE GENOMIC DNA]</scope>
    <source>
        <strain>ULPAs1</strain>
    </source>
</reference>
<evidence type="ECO:0000255" key="1">
    <source>
        <dbReference type="HAMAP-Rule" id="MF_00387"/>
    </source>
</evidence>
<gene>
    <name evidence="1" type="primary">lpxA</name>
    <name type="ordered locus">HEAR1347</name>
</gene>
<accession>A4G4T3</accession>
<organism>
    <name type="scientific">Herminiimonas arsenicoxydans</name>
    <dbReference type="NCBI Taxonomy" id="204773"/>
    <lineage>
        <taxon>Bacteria</taxon>
        <taxon>Pseudomonadati</taxon>
        <taxon>Pseudomonadota</taxon>
        <taxon>Betaproteobacteria</taxon>
        <taxon>Burkholderiales</taxon>
        <taxon>Oxalobacteraceae</taxon>
        <taxon>Herminiimonas</taxon>
    </lineage>
</organism>
<sequence>MSLIHSTAIVDPKAQLDTSVEVGAYSVIGPHVKIDAGSKIGPHVVVEGHTTIGRDNTIFQFASIGAAPQDKKYAGEPTQLSIGDRNTIREFVTINLGTTQDANITRLGSDNWIMAYVHIAHDCQLGDNIILANNATLAGHVHLEDWVFLGGFTSVHQFCRIGAHAMTAFTAAVSQDIPPFVTAAGNRAVPAGINSEGLKRRGFSSEQIMAIKRGYKIIYRSNLPLEEAKAALLAEENKSSDAAPYLRQLRTFIETSPRGIIR</sequence>
<proteinExistence type="inferred from homology"/>
<feature type="chain" id="PRO_0000302580" description="Acyl-[acyl-carrier-protein]--UDP-N-acetylglucosamine O-acyltransferase">
    <location>
        <begin position="1"/>
        <end position="262"/>
    </location>
</feature>
<protein>
    <recommendedName>
        <fullName evidence="1">Acyl-[acyl-carrier-protein]--UDP-N-acetylglucosamine O-acyltransferase</fullName>
        <shortName evidence="1">UDP-N-acetylglucosamine acyltransferase</shortName>
        <ecNumber evidence="1">2.3.1.129</ecNumber>
    </recommendedName>
</protein>
<keyword id="KW-0012">Acyltransferase</keyword>
<keyword id="KW-0963">Cytoplasm</keyword>
<keyword id="KW-0441">Lipid A biosynthesis</keyword>
<keyword id="KW-0444">Lipid biosynthesis</keyword>
<keyword id="KW-0443">Lipid metabolism</keyword>
<keyword id="KW-1185">Reference proteome</keyword>
<keyword id="KW-0677">Repeat</keyword>
<keyword id="KW-0808">Transferase</keyword>
<comment type="function">
    <text evidence="1">Involved in the biosynthesis of lipid A, a phosphorylated glycolipid that anchors the lipopolysaccharide to the outer membrane of the cell.</text>
</comment>
<comment type="catalytic activity">
    <reaction evidence="1">
        <text>a (3R)-hydroxyacyl-[ACP] + UDP-N-acetyl-alpha-D-glucosamine = a UDP-3-O-[(3R)-3-hydroxyacyl]-N-acetyl-alpha-D-glucosamine + holo-[ACP]</text>
        <dbReference type="Rhea" id="RHEA:67812"/>
        <dbReference type="Rhea" id="RHEA-COMP:9685"/>
        <dbReference type="Rhea" id="RHEA-COMP:9945"/>
        <dbReference type="ChEBI" id="CHEBI:57705"/>
        <dbReference type="ChEBI" id="CHEBI:64479"/>
        <dbReference type="ChEBI" id="CHEBI:78827"/>
        <dbReference type="ChEBI" id="CHEBI:173225"/>
        <dbReference type="EC" id="2.3.1.129"/>
    </reaction>
</comment>
<comment type="pathway">
    <text evidence="1">Glycolipid biosynthesis; lipid IV(A) biosynthesis; lipid IV(A) from (3R)-3-hydroxytetradecanoyl-[acyl-carrier-protein] and UDP-N-acetyl-alpha-D-glucosamine: step 1/6.</text>
</comment>
<comment type="subunit">
    <text evidence="1">Homotrimer.</text>
</comment>
<comment type="subcellular location">
    <subcellularLocation>
        <location evidence="1">Cytoplasm</location>
    </subcellularLocation>
</comment>
<comment type="similarity">
    <text evidence="1">Belongs to the transferase hexapeptide repeat family. LpxA subfamily.</text>
</comment>
<name>LPXA_HERAR</name>
<dbReference type="EC" id="2.3.1.129" evidence="1"/>
<dbReference type="EMBL" id="CU207211">
    <property type="protein sequence ID" value="CAL61520.1"/>
    <property type="molecule type" value="Genomic_DNA"/>
</dbReference>
<dbReference type="SMR" id="A4G4T3"/>
<dbReference type="STRING" id="204773.HEAR1347"/>
<dbReference type="KEGG" id="har:HEAR1347"/>
<dbReference type="eggNOG" id="COG1043">
    <property type="taxonomic scope" value="Bacteria"/>
</dbReference>
<dbReference type="HOGENOM" id="CLU_061249_0_0_4"/>
<dbReference type="OrthoDB" id="9807278at2"/>
<dbReference type="UniPathway" id="UPA00359">
    <property type="reaction ID" value="UER00477"/>
</dbReference>
<dbReference type="Proteomes" id="UP000006697">
    <property type="component" value="Chromosome"/>
</dbReference>
<dbReference type="GO" id="GO:0005737">
    <property type="term" value="C:cytoplasm"/>
    <property type="evidence" value="ECO:0007669"/>
    <property type="project" value="UniProtKB-SubCell"/>
</dbReference>
<dbReference type="GO" id="GO:0016020">
    <property type="term" value="C:membrane"/>
    <property type="evidence" value="ECO:0007669"/>
    <property type="project" value="GOC"/>
</dbReference>
<dbReference type="GO" id="GO:0008780">
    <property type="term" value="F:acyl-[acyl-carrier-protein]-UDP-N-acetylglucosamine O-acyltransferase activity"/>
    <property type="evidence" value="ECO:0007669"/>
    <property type="project" value="UniProtKB-UniRule"/>
</dbReference>
<dbReference type="GO" id="GO:0009245">
    <property type="term" value="P:lipid A biosynthetic process"/>
    <property type="evidence" value="ECO:0007669"/>
    <property type="project" value="UniProtKB-UniRule"/>
</dbReference>
<dbReference type="CDD" id="cd03351">
    <property type="entry name" value="LbH_UDP-GlcNAc_AT"/>
    <property type="match status" value="1"/>
</dbReference>
<dbReference type="Gene3D" id="2.160.10.10">
    <property type="entry name" value="Hexapeptide repeat proteins"/>
    <property type="match status" value="1"/>
</dbReference>
<dbReference type="Gene3D" id="1.20.1180.10">
    <property type="entry name" value="Udp N-acetylglucosamine O-acyltransferase, C-terminal domain"/>
    <property type="match status" value="1"/>
</dbReference>
<dbReference type="HAMAP" id="MF_00387">
    <property type="entry name" value="LpxA"/>
    <property type="match status" value="1"/>
</dbReference>
<dbReference type="InterPro" id="IPR029098">
    <property type="entry name" value="Acetyltransf_C"/>
</dbReference>
<dbReference type="InterPro" id="IPR037157">
    <property type="entry name" value="Acetyltransf_C_sf"/>
</dbReference>
<dbReference type="InterPro" id="IPR001451">
    <property type="entry name" value="Hexapep"/>
</dbReference>
<dbReference type="InterPro" id="IPR010137">
    <property type="entry name" value="Lipid_A_LpxA"/>
</dbReference>
<dbReference type="InterPro" id="IPR011004">
    <property type="entry name" value="Trimer_LpxA-like_sf"/>
</dbReference>
<dbReference type="NCBIfam" id="TIGR01852">
    <property type="entry name" value="lipid_A_lpxA"/>
    <property type="match status" value="1"/>
</dbReference>
<dbReference type="NCBIfam" id="NF003657">
    <property type="entry name" value="PRK05289.1"/>
    <property type="match status" value="1"/>
</dbReference>
<dbReference type="PANTHER" id="PTHR43480">
    <property type="entry name" value="ACYL-[ACYL-CARRIER-PROTEIN]--UDP-N-ACETYLGLUCOSAMINE O-ACYLTRANSFERASE"/>
    <property type="match status" value="1"/>
</dbReference>
<dbReference type="PANTHER" id="PTHR43480:SF1">
    <property type="entry name" value="ACYL-[ACYL-CARRIER-PROTEIN]--UDP-N-ACETYLGLUCOSAMINE O-ACYLTRANSFERASE, MITOCHONDRIAL-RELATED"/>
    <property type="match status" value="1"/>
</dbReference>
<dbReference type="Pfam" id="PF13720">
    <property type="entry name" value="Acetyltransf_11"/>
    <property type="match status" value="1"/>
</dbReference>
<dbReference type="Pfam" id="PF00132">
    <property type="entry name" value="Hexapep"/>
    <property type="match status" value="1"/>
</dbReference>
<dbReference type="PIRSF" id="PIRSF000456">
    <property type="entry name" value="UDP-GlcNAc_acltr"/>
    <property type="match status" value="1"/>
</dbReference>
<dbReference type="SUPFAM" id="SSF51161">
    <property type="entry name" value="Trimeric LpxA-like enzymes"/>
    <property type="match status" value="1"/>
</dbReference>